<feature type="chain" id="PRO_0000275239" description="Potassium/proton antiporter CemA">
    <location>
        <begin position="1"/>
        <end position="229"/>
    </location>
</feature>
<feature type="transmembrane region" description="Helical" evidence="1">
    <location>
        <begin position="7"/>
        <end position="27"/>
    </location>
</feature>
<feature type="transmembrane region" description="Helical" evidence="1">
    <location>
        <begin position="114"/>
        <end position="134"/>
    </location>
</feature>
<feature type="transmembrane region" description="Helical" evidence="1">
    <location>
        <begin position="154"/>
        <end position="174"/>
    </location>
</feature>
<feature type="transmembrane region" description="Helical" evidence="1">
    <location>
        <begin position="189"/>
        <end position="209"/>
    </location>
</feature>
<gene>
    <name evidence="1" type="primary">cemA</name>
</gene>
<name>CEMA_GOSHI</name>
<comment type="function">
    <text evidence="1">Contributes to K(+)/H(+) antiport activity by supporting proton efflux to control proton extrusion and homeostasis in chloroplasts in a light-dependent manner to modulate photosynthesis. Prevents excessive induction of non-photochemical quenching (NPQ) under continuous-light conditions. Indirectly promotes efficient inorganic carbon uptake into chloroplasts.</text>
</comment>
<comment type="catalytic activity">
    <reaction evidence="1">
        <text>K(+)(in) + H(+)(out) = K(+)(out) + H(+)(in)</text>
        <dbReference type="Rhea" id="RHEA:29467"/>
        <dbReference type="ChEBI" id="CHEBI:15378"/>
        <dbReference type="ChEBI" id="CHEBI:29103"/>
    </reaction>
</comment>
<comment type="subcellular location">
    <subcellularLocation>
        <location evidence="1">Plastid</location>
        <location evidence="1">Chloroplast inner membrane</location>
        <topology evidence="1">Multi-pass membrane protein</topology>
    </subcellularLocation>
</comment>
<comment type="similarity">
    <text evidence="1 2">Belongs to the CemA family.</text>
</comment>
<evidence type="ECO:0000255" key="1">
    <source>
        <dbReference type="HAMAP-Rule" id="MF_01308"/>
    </source>
</evidence>
<evidence type="ECO:0000305" key="2"/>
<reference key="1">
    <citation type="journal article" date="2006" name="BMC Genomics">
        <title>The complete chloroplast genome sequence of Gossypium hirsutum: organization and phylogenetic relationships to other angiosperms.</title>
        <authorList>
            <person name="Lee S.-B."/>
            <person name="Kaittanis C."/>
            <person name="Jansen R.K."/>
            <person name="Hostetler J.B."/>
            <person name="Tallon L.J."/>
            <person name="Town C.D."/>
            <person name="Daniell H."/>
        </authorList>
    </citation>
    <scope>NUCLEOTIDE SEQUENCE [LARGE SCALE GENOMIC DNA]</scope>
    <source>
        <strain>cv. Coker 310FR</strain>
    </source>
</reference>
<sequence length="229" mass="26936">MAKKKAFTPLLYLASIVFLPWWISLSFNKSLKSWITNWWDTRQSETFLNDIQEKSILEQFIEVEELFLLDEMIKEYPETHLQKLRIGIQKETIQLIKLHNEDHIHTILHFSTNLICFVILSGYSILGNEELLILNSWVQEFLYNLSDTIKAFSILLLTDLCIGFHSPHGWELMIGSIYKDFGFAHNDQIISGLVSTFPVILDTIFKYWIFRYLNRVSPSLVVIYHSMND</sequence>
<dbReference type="EMBL" id="DQ345959">
    <property type="protein sequence ID" value="ABC73640.1"/>
    <property type="molecule type" value="Genomic_DNA"/>
</dbReference>
<dbReference type="RefSeq" id="YP_538947.1">
    <property type="nucleotide sequence ID" value="NC_007944.1"/>
</dbReference>
<dbReference type="GeneID" id="3989161"/>
<dbReference type="KEGG" id="ghi:3989161"/>
<dbReference type="OrthoDB" id="8260at41938"/>
<dbReference type="Proteomes" id="UP000189702">
    <property type="component" value="Chloroplast Pltd"/>
</dbReference>
<dbReference type="GO" id="GO:0009706">
    <property type="term" value="C:chloroplast inner membrane"/>
    <property type="evidence" value="ECO:0007669"/>
    <property type="project" value="UniProtKB-SubCell"/>
</dbReference>
<dbReference type="GO" id="GO:0015297">
    <property type="term" value="F:antiporter activity"/>
    <property type="evidence" value="ECO:0007669"/>
    <property type="project" value="UniProtKB-KW"/>
</dbReference>
<dbReference type="GO" id="GO:0015078">
    <property type="term" value="F:proton transmembrane transporter activity"/>
    <property type="evidence" value="ECO:0007669"/>
    <property type="project" value="UniProtKB-UniRule"/>
</dbReference>
<dbReference type="GO" id="GO:0006813">
    <property type="term" value="P:potassium ion transport"/>
    <property type="evidence" value="ECO:0007669"/>
    <property type="project" value="UniProtKB-UniRule"/>
</dbReference>
<dbReference type="HAMAP" id="MF_01308">
    <property type="entry name" value="CemA_PxcA"/>
    <property type="match status" value="1"/>
</dbReference>
<dbReference type="InterPro" id="IPR004282">
    <property type="entry name" value="CemA"/>
</dbReference>
<dbReference type="PANTHER" id="PTHR33650:SF2">
    <property type="entry name" value="CHLOROPLAST ENVELOPE MEMBRANE PROTEIN"/>
    <property type="match status" value="1"/>
</dbReference>
<dbReference type="PANTHER" id="PTHR33650">
    <property type="entry name" value="CHLOROPLAST ENVELOPE MEMBRANE PROTEIN-RELATED"/>
    <property type="match status" value="1"/>
</dbReference>
<dbReference type="Pfam" id="PF03040">
    <property type="entry name" value="CemA"/>
    <property type="match status" value="1"/>
</dbReference>
<accession>Q2L922</accession>
<protein>
    <recommendedName>
        <fullName evidence="1">Potassium/proton antiporter CemA</fullName>
    </recommendedName>
    <alternativeName>
        <fullName evidence="1">Chloroplast envelope membrane protein A</fullName>
        <shortName evidence="1">CemA</shortName>
    </alternativeName>
</protein>
<keyword id="KW-0050">Antiport</keyword>
<keyword id="KW-0150">Chloroplast</keyword>
<keyword id="KW-0375">Hydrogen ion transport</keyword>
<keyword id="KW-0406">Ion transport</keyword>
<keyword id="KW-0472">Membrane</keyword>
<keyword id="KW-0934">Plastid</keyword>
<keyword id="KW-1001">Plastid inner membrane</keyword>
<keyword id="KW-0630">Potassium</keyword>
<keyword id="KW-0633">Potassium transport</keyword>
<keyword id="KW-1185">Reference proteome</keyword>
<keyword id="KW-0812">Transmembrane</keyword>
<keyword id="KW-1133">Transmembrane helix</keyword>
<keyword id="KW-0813">Transport</keyword>
<organism>
    <name type="scientific">Gossypium hirsutum</name>
    <name type="common">Upland cotton</name>
    <name type="synonym">Gossypium mexicanum</name>
    <dbReference type="NCBI Taxonomy" id="3635"/>
    <lineage>
        <taxon>Eukaryota</taxon>
        <taxon>Viridiplantae</taxon>
        <taxon>Streptophyta</taxon>
        <taxon>Embryophyta</taxon>
        <taxon>Tracheophyta</taxon>
        <taxon>Spermatophyta</taxon>
        <taxon>Magnoliopsida</taxon>
        <taxon>eudicotyledons</taxon>
        <taxon>Gunneridae</taxon>
        <taxon>Pentapetalae</taxon>
        <taxon>rosids</taxon>
        <taxon>malvids</taxon>
        <taxon>Malvales</taxon>
        <taxon>Malvaceae</taxon>
        <taxon>Malvoideae</taxon>
        <taxon>Gossypium</taxon>
    </lineage>
</organism>
<geneLocation type="chloroplast"/>
<proteinExistence type="inferred from homology"/>